<name>T23O_BRADU</name>
<reference key="1">
    <citation type="journal article" date="2002" name="DNA Res.">
        <title>Complete genomic sequence of nitrogen-fixing symbiotic bacterium Bradyrhizobium japonicum USDA110.</title>
        <authorList>
            <person name="Kaneko T."/>
            <person name="Nakamura Y."/>
            <person name="Sato S."/>
            <person name="Minamisawa K."/>
            <person name="Uchiumi T."/>
            <person name="Sasamoto S."/>
            <person name="Watanabe A."/>
            <person name="Idesawa K."/>
            <person name="Iriguchi M."/>
            <person name="Kawashima K."/>
            <person name="Kohara M."/>
            <person name="Matsumoto M."/>
            <person name="Shimpo S."/>
            <person name="Tsuruoka H."/>
            <person name="Wada T."/>
            <person name="Yamada M."/>
            <person name="Tabata S."/>
        </authorList>
    </citation>
    <scope>NUCLEOTIDE SEQUENCE [LARGE SCALE GENOMIC DNA]</scope>
    <source>
        <strain>JCM 10833 / BCRC 13528 / IAM 13628 / NBRC 14792 / USDA 110</strain>
    </source>
</reference>
<accession>Q89MN4</accession>
<organism>
    <name type="scientific">Bradyrhizobium diazoefficiens (strain JCM 10833 / BCRC 13528 / IAM 13628 / NBRC 14792 / USDA 110)</name>
    <dbReference type="NCBI Taxonomy" id="224911"/>
    <lineage>
        <taxon>Bacteria</taxon>
        <taxon>Pseudomonadati</taxon>
        <taxon>Pseudomonadota</taxon>
        <taxon>Alphaproteobacteria</taxon>
        <taxon>Hyphomicrobiales</taxon>
        <taxon>Nitrobacteraceae</taxon>
        <taxon>Bradyrhizobium</taxon>
    </lineage>
</organism>
<proteinExistence type="inferred from homology"/>
<comment type="function">
    <text evidence="1">Heme-dependent dioxygenase that catalyzes the oxidative cleavage of the L-tryptophan (L-Trp) pyrrole ring and converts L-tryptophan to N-formyl-L-kynurenine. Catalyzes the oxidative cleavage of the indole moiety.</text>
</comment>
<comment type="catalytic activity">
    <reaction evidence="1">
        <text>L-tryptophan + O2 = N-formyl-L-kynurenine</text>
        <dbReference type="Rhea" id="RHEA:24536"/>
        <dbReference type="ChEBI" id="CHEBI:15379"/>
        <dbReference type="ChEBI" id="CHEBI:57912"/>
        <dbReference type="ChEBI" id="CHEBI:58629"/>
        <dbReference type="EC" id="1.13.11.11"/>
    </reaction>
</comment>
<comment type="cofactor">
    <cofactor evidence="1">
        <name>heme</name>
        <dbReference type="ChEBI" id="CHEBI:30413"/>
    </cofactor>
    <text evidence="1">Binds 1 heme group per subunit.</text>
</comment>
<comment type="pathway">
    <text evidence="1">Amino-acid degradation; L-tryptophan degradation via kynurenine pathway; L-kynurenine from L-tryptophan: step 1/2.</text>
</comment>
<comment type="subunit">
    <text evidence="1">Homotetramer.</text>
</comment>
<comment type="similarity">
    <text evidence="1">Belongs to the tryptophan 2,3-dioxygenase family.</text>
</comment>
<keyword id="KW-0223">Dioxygenase</keyword>
<keyword id="KW-0349">Heme</keyword>
<keyword id="KW-0408">Iron</keyword>
<keyword id="KW-0479">Metal-binding</keyword>
<keyword id="KW-0560">Oxidoreductase</keyword>
<keyword id="KW-1185">Reference proteome</keyword>
<keyword id="KW-0823">Tryptophan catabolism</keyword>
<gene>
    <name evidence="1" type="primary">kynA</name>
    <name type="ordered locus">blr4158</name>
</gene>
<evidence type="ECO:0000255" key="1">
    <source>
        <dbReference type="HAMAP-Rule" id="MF_01972"/>
    </source>
</evidence>
<dbReference type="EC" id="1.13.11.11" evidence="1"/>
<dbReference type="EMBL" id="BA000040">
    <property type="protein sequence ID" value="BAC49423.1"/>
    <property type="molecule type" value="Genomic_DNA"/>
</dbReference>
<dbReference type="RefSeq" id="NP_770798.1">
    <property type="nucleotide sequence ID" value="NC_004463.1"/>
</dbReference>
<dbReference type="RefSeq" id="WP_011086931.1">
    <property type="nucleotide sequence ID" value="NC_004463.1"/>
</dbReference>
<dbReference type="SMR" id="Q89MN4"/>
<dbReference type="STRING" id="224911.AAV28_17830"/>
<dbReference type="EnsemblBacteria" id="BAC49423">
    <property type="protein sequence ID" value="BAC49423"/>
    <property type="gene ID" value="BAC49423"/>
</dbReference>
<dbReference type="GeneID" id="46491159"/>
<dbReference type="KEGG" id="bja:blr4158"/>
<dbReference type="PATRIC" id="fig|224911.44.peg.3875"/>
<dbReference type="eggNOG" id="COG3483">
    <property type="taxonomic scope" value="Bacteria"/>
</dbReference>
<dbReference type="HOGENOM" id="CLU_063240_0_0_5"/>
<dbReference type="InParanoid" id="Q89MN4"/>
<dbReference type="OrthoDB" id="9776847at2"/>
<dbReference type="PhylomeDB" id="Q89MN4"/>
<dbReference type="UniPathway" id="UPA00333">
    <property type="reaction ID" value="UER00453"/>
</dbReference>
<dbReference type="Proteomes" id="UP000002526">
    <property type="component" value="Chromosome"/>
</dbReference>
<dbReference type="GO" id="GO:0020037">
    <property type="term" value="F:heme binding"/>
    <property type="evidence" value="ECO:0000250"/>
    <property type="project" value="UniProtKB"/>
</dbReference>
<dbReference type="GO" id="GO:0046872">
    <property type="term" value="F:metal ion binding"/>
    <property type="evidence" value="ECO:0007669"/>
    <property type="project" value="UniProtKB-KW"/>
</dbReference>
<dbReference type="GO" id="GO:0004833">
    <property type="term" value="F:tryptophan 2,3-dioxygenase activity"/>
    <property type="evidence" value="ECO:0000250"/>
    <property type="project" value="UniProtKB"/>
</dbReference>
<dbReference type="GO" id="GO:0019442">
    <property type="term" value="P:L-tryptophan catabolic process to acetyl-CoA"/>
    <property type="evidence" value="ECO:0000318"/>
    <property type="project" value="GO_Central"/>
</dbReference>
<dbReference type="GO" id="GO:0019441">
    <property type="term" value="P:L-tryptophan catabolic process to kynurenine"/>
    <property type="evidence" value="ECO:0000250"/>
    <property type="project" value="UniProtKB"/>
</dbReference>
<dbReference type="FunFam" id="1.20.58.480:FF:000001">
    <property type="entry name" value="Tryptophan 2,3-dioxygenase"/>
    <property type="match status" value="1"/>
</dbReference>
<dbReference type="Gene3D" id="1.20.58.480">
    <property type="match status" value="1"/>
</dbReference>
<dbReference type="HAMAP" id="MF_01972">
    <property type="entry name" value="T23O"/>
    <property type="match status" value="1"/>
</dbReference>
<dbReference type="InterPro" id="IPR037217">
    <property type="entry name" value="Trp/Indoleamine_2_3_dOase-like"/>
</dbReference>
<dbReference type="InterPro" id="IPR017485">
    <property type="entry name" value="Trp_2-3-dOase_bac"/>
</dbReference>
<dbReference type="InterPro" id="IPR004981">
    <property type="entry name" value="Trp_2_3_dOase"/>
</dbReference>
<dbReference type="NCBIfam" id="TIGR03036">
    <property type="entry name" value="trp_2_3_diox"/>
    <property type="match status" value="1"/>
</dbReference>
<dbReference type="PANTHER" id="PTHR10138">
    <property type="entry name" value="TRYPTOPHAN 2,3-DIOXYGENASE"/>
    <property type="match status" value="1"/>
</dbReference>
<dbReference type="PANTHER" id="PTHR10138:SF0">
    <property type="entry name" value="TRYPTOPHAN 2,3-DIOXYGENASE"/>
    <property type="match status" value="1"/>
</dbReference>
<dbReference type="Pfam" id="PF03301">
    <property type="entry name" value="Trp_dioxygenase"/>
    <property type="match status" value="2"/>
</dbReference>
<dbReference type="SUPFAM" id="SSF140959">
    <property type="entry name" value="Indolic compounds 2,3-dioxygenase-like"/>
    <property type="match status" value="1"/>
</dbReference>
<protein>
    <recommendedName>
        <fullName evidence="1">Tryptophan 2,3-dioxygenase</fullName>
        <shortName evidence="1">TDO</shortName>
        <ecNumber evidence="1">1.13.11.11</ecNumber>
    </recommendedName>
    <alternativeName>
        <fullName evidence="1">Tryptamin 2,3-dioxygenase</fullName>
    </alternativeName>
    <alternativeName>
        <fullName evidence="1">Tryptophan oxygenase</fullName>
        <shortName evidence="1">TO</shortName>
        <shortName evidence="1">TRPO</shortName>
    </alternativeName>
    <alternativeName>
        <fullName evidence="1">Tryptophan pyrrolase</fullName>
    </alternativeName>
    <alternativeName>
        <fullName evidence="1">Tryptophanase</fullName>
    </alternativeName>
</protein>
<sequence>MTSSDYDPASEGAETDFSRRMSYGDYLALDAILGAQHPLSEAHDEMLFIIQHQTTELWMRLAIHELSAARRAIARDEVQPAMKMLARMSRIFEQLNNAWDVLRTMTPSEYTRFRSQLGQSSGFQSRQYRLIEYLLGNRNHAMLKPHAHDAEVTKLLEAELATPSLYDEVLRLADRNGLTMPAAVLSRDVRETHSFNEGVLQAWRVVYEAPETHWMLYELAEKLVDFEDYFRRWRFNHVTTVERVIGFKRGTGGTGGVSYLKRMLEVELFPELWRVRTIL</sequence>
<feature type="chain" id="PRO_0000360093" description="Tryptophan 2,3-dioxygenase">
    <location>
        <begin position="1"/>
        <end position="279"/>
    </location>
</feature>
<feature type="binding site" evidence="1">
    <location>
        <begin position="48"/>
        <end position="52"/>
    </location>
    <ligand>
        <name>substrate</name>
    </ligand>
</feature>
<feature type="binding site" evidence="1">
    <location>
        <position position="110"/>
    </location>
    <ligand>
        <name>substrate</name>
    </ligand>
</feature>
<feature type="binding site" evidence="1">
    <location>
        <position position="114"/>
    </location>
    <ligand>
        <name>substrate</name>
    </ligand>
</feature>
<feature type="binding site" description="axial binding residue" evidence="1">
    <location>
        <position position="237"/>
    </location>
    <ligand>
        <name>heme</name>
        <dbReference type="ChEBI" id="CHEBI:30413"/>
    </ligand>
    <ligandPart>
        <name>Fe</name>
        <dbReference type="ChEBI" id="CHEBI:18248"/>
    </ligandPart>
</feature>
<feature type="binding site" evidence="1">
    <location>
        <position position="251"/>
    </location>
    <ligand>
        <name>substrate</name>
    </ligand>
</feature>